<sequence length="146" mass="15855">VHLSGEEKTALATLWGKNVADEVGGEALGRLLVVYPWTQRFFDSFGDLSSASALMSNAKVKAHGKKVLDSFSEGLKHLDDLKGTFSSLSELHCDKLHVDPENFRLLGNMLVLVMAHHLGKDFTPAAQAAYQKVVAGVANALAHKYH</sequence>
<organism>
    <name type="scientific">Tamiasciurus hudsonicus</name>
    <name type="common">American red squirrel</name>
    <name type="synonym">Sciurus hudsonicus</name>
    <dbReference type="NCBI Taxonomy" id="10009"/>
    <lineage>
        <taxon>Eukaryota</taxon>
        <taxon>Metazoa</taxon>
        <taxon>Chordata</taxon>
        <taxon>Craniata</taxon>
        <taxon>Vertebrata</taxon>
        <taxon>Euteleostomi</taxon>
        <taxon>Mammalia</taxon>
        <taxon>Eutheria</taxon>
        <taxon>Euarchontoglires</taxon>
        <taxon>Glires</taxon>
        <taxon>Rodentia</taxon>
        <taxon>Sciuromorpha</taxon>
        <taxon>Sciuridae</taxon>
        <taxon>Sciurinae</taxon>
        <taxon>Tamiasciurini</taxon>
        <taxon>Tamiasciurus</taxon>
    </lineage>
</organism>
<evidence type="ECO:0000250" key="1">
    <source>
        <dbReference type="UniProtKB" id="P02070"/>
    </source>
</evidence>
<evidence type="ECO:0000250" key="2">
    <source>
        <dbReference type="UniProtKB" id="P02086"/>
    </source>
</evidence>
<evidence type="ECO:0000250" key="3">
    <source>
        <dbReference type="UniProtKB" id="P68871"/>
    </source>
</evidence>
<evidence type="ECO:0000255" key="4">
    <source>
        <dbReference type="PROSITE-ProRule" id="PRU00238"/>
    </source>
</evidence>
<evidence type="ECO:0000269" key="5">
    <source>
    </source>
</evidence>
<evidence type="ECO:0000303" key="6">
    <source>
    </source>
</evidence>
<evidence type="ECO:0000305" key="7"/>
<dbReference type="SMR" id="B3EWD8"/>
<dbReference type="GO" id="GO:0072562">
    <property type="term" value="C:blood microparticle"/>
    <property type="evidence" value="ECO:0007669"/>
    <property type="project" value="TreeGrafter"/>
</dbReference>
<dbReference type="GO" id="GO:0031838">
    <property type="term" value="C:haptoglobin-hemoglobin complex"/>
    <property type="evidence" value="ECO:0007669"/>
    <property type="project" value="TreeGrafter"/>
</dbReference>
<dbReference type="GO" id="GO:0005833">
    <property type="term" value="C:hemoglobin complex"/>
    <property type="evidence" value="ECO:0007669"/>
    <property type="project" value="InterPro"/>
</dbReference>
<dbReference type="GO" id="GO:0031720">
    <property type="term" value="F:haptoglobin binding"/>
    <property type="evidence" value="ECO:0007669"/>
    <property type="project" value="TreeGrafter"/>
</dbReference>
<dbReference type="GO" id="GO:0020037">
    <property type="term" value="F:heme binding"/>
    <property type="evidence" value="ECO:0007669"/>
    <property type="project" value="InterPro"/>
</dbReference>
<dbReference type="GO" id="GO:0031721">
    <property type="term" value="F:hemoglobin alpha binding"/>
    <property type="evidence" value="ECO:0007669"/>
    <property type="project" value="TreeGrafter"/>
</dbReference>
<dbReference type="GO" id="GO:0046872">
    <property type="term" value="F:metal ion binding"/>
    <property type="evidence" value="ECO:0007669"/>
    <property type="project" value="UniProtKB-KW"/>
</dbReference>
<dbReference type="GO" id="GO:0043177">
    <property type="term" value="F:organic acid binding"/>
    <property type="evidence" value="ECO:0007669"/>
    <property type="project" value="TreeGrafter"/>
</dbReference>
<dbReference type="GO" id="GO:0019825">
    <property type="term" value="F:oxygen binding"/>
    <property type="evidence" value="ECO:0007669"/>
    <property type="project" value="InterPro"/>
</dbReference>
<dbReference type="GO" id="GO:0005344">
    <property type="term" value="F:oxygen carrier activity"/>
    <property type="evidence" value="ECO:0007669"/>
    <property type="project" value="UniProtKB-KW"/>
</dbReference>
<dbReference type="GO" id="GO:0004601">
    <property type="term" value="F:peroxidase activity"/>
    <property type="evidence" value="ECO:0007669"/>
    <property type="project" value="TreeGrafter"/>
</dbReference>
<dbReference type="GO" id="GO:0042744">
    <property type="term" value="P:hydrogen peroxide catabolic process"/>
    <property type="evidence" value="ECO:0007669"/>
    <property type="project" value="TreeGrafter"/>
</dbReference>
<dbReference type="CDD" id="cd08925">
    <property type="entry name" value="Hb-beta-like"/>
    <property type="match status" value="1"/>
</dbReference>
<dbReference type="FunFam" id="1.10.490.10:FF:000001">
    <property type="entry name" value="Hemoglobin subunit beta"/>
    <property type="match status" value="1"/>
</dbReference>
<dbReference type="Gene3D" id="1.10.490.10">
    <property type="entry name" value="Globins"/>
    <property type="match status" value="1"/>
</dbReference>
<dbReference type="InterPro" id="IPR000971">
    <property type="entry name" value="Globin"/>
</dbReference>
<dbReference type="InterPro" id="IPR009050">
    <property type="entry name" value="Globin-like_sf"/>
</dbReference>
<dbReference type="InterPro" id="IPR012292">
    <property type="entry name" value="Globin/Proto"/>
</dbReference>
<dbReference type="InterPro" id="IPR002337">
    <property type="entry name" value="Hemoglobin_b"/>
</dbReference>
<dbReference type="InterPro" id="IPR050056">
    <property type="entry name" value="Hemoglobin_oxygen_transport"/>
</dbReference>
<dbReference type="PANTHER" id="PTHR11442">
    <property type="entry name" value="HEMOGLOBIN FAMILY MEMBER"/>
    <property type="match status" value="1"/>
</dbReference>
<dbReference type="PANTHER" id="PTHR11442:SF42">
    <property type="entry name" value="HEMOGLOBIN SUBUNIT BETA"/>
    <property type="match status" value="1"/>
</dbReference>
<dbReference type="Pfam" id="PF00042">
    <property type="entry name" value="Globin"/>
    <property type="match status" value="1"/>
</dbReference>
<dbReference type="PRINTS" id="PR00814">
    <property type="entry name" value="BETAHAEM"/>
</dbReference>
<dbReference type="SUPFAM" id="SSF46458">
    <property type="entry name" value="Globin-like"/>
    <property type="match status" value="1"/>
</dbReference>
<dbReference type="PROSITE" id="PS01033">
    <property type="entry name" value="GLOBIN"/>
    <property type="match status" value="1"/>
</dbReference>
<reference evidence="7" key="1">
    <citation type="journal article" date="2012" name="Biol. Chem.">
        <title>Development of a host blood meal database: de novo sequencing of hemoglobin from nine small mammals using mass spectrometry.</title>
        <authorList>
            <person name="Laskay U.A."/>
            <person name="Burg J."/>
            <person name="Kaleta E.J."/>
            <person name="Vilcins I.M."/>
            <person name="Telford Iii S.R."/>
            <person name="Barbour A.G."/>
            <person name="Wysocki V.H."/>
        </authorList>
    </citation>
    <scope>PROTEIN SEQUENCE</scope>
    <source>
        <tissue evidence="5">Erythrocyte</tissue>
    </source>
</reference>
<keyword id="KW-0007">Acetylation</keyword>
<keyword id="KW-0903">Direct protein sequencing</keyword>
<keyword id="KW-0349">Heme</keyword>
<keyword id="KW-0408">Iron</keyword>
<keyword id="KW-0479">Metal-binding</keyword>
<keyword id="KW-0561">Oxygen transport</keyword>
<keyword id="KW-0597">Phosphoprotein</keyword>
<keyword id="KW-0702">S-nitrosylation</keyword>
<keyword id="KW-0813">Transport</keyword>
<protein>
    <recommendedName>
        <fullName evidence="6">Hemoglobin subunit beta</fullName>
    </recommendedName>
</protein>
<comment type="function">
    <text evidence="7">Involved in oxygen transport from the lung to the various peripheral tissues.</text>
</comment>
<comment type="subunit">
    <text evidence="7">Heterotetramer of two alpha chains and two beta chains.</text>
</comment>
<comment type="tissue specificity">
    <text evidence="7">Red blood cells.</text>
</comment>
<comment type="similarity">
    <text evidence="4">Belongs to the globin family.</text>
</comment>
<feature type="chain" id="PRO_0000415599" description="Hemoglobin subunit beta">
    <location>
        <begin position="1"/>
        <end position="146"/>
    </location>
</feature>
<feature type="domain" description="Globin" evidence="4">
    <location>
        <begin position="2"/>
        <end position="146"/>
    </location>
</feature>
<feature type="binding site" description="distal binding residue" evidence="1 4">
    <location>
        <position position="63"/>
    </location>
    <ligand>
        <name>heme b</name>
        <dbReference type="ChEBI" id="CHEBI:60344"/>
    </ligand>
    <ligandPart>
        <name>Fe</name>
        <dbReference type="ChEBI" id="CHEBI:18248"/>
    </ligandPart>
</feature>
<feature type="binding site" description="proximal binding residue" evidence="1 4">
    <location>
        <position position="92"/>
    </location>
    <ligand>
        <name>heme b</name>
        <dbReference type="ChEBI" id="CHEBI:60344"/>
    </ligand>
    <ligandPart>
        <name>Fe</name>
        <dbReference type="ChEBI" id="CHEBI:18248"/>
    </ligandPart>
</feature>
<feature type="modified residue" description="N-acetylvaline" evidence="2">
    <location>
        <position position="1"/>
    </location>
</feature>
<feature type="modified residue" description="Phosphoserine" evidence="3">
    <location>
        <position position="44"/>
    </location>
</feature>
<feature type="modified residue" description="N6-acetyllysine" evidence="3">
    <location>
        <position position="59"/>
    </location>
</feature>
<feature type="modified residue" description="N6-acetyllysine" evidence="3">
    <location>
        <position position="82"/>
    </location>
</feature>
<feature type="modified residue" description="S-nitrosocysteine" evidence="3">
    <location>
        <position position="93"/>
    </location>
</feature>
<feature type="modified residue" description="N6-acetyllysine" evidence="3">
    <location>
        <position position="144"/>
    </location>
</feature>
<feature type="unsure residue" description="L or I" evidence="5">
    <location>
        <position position="3"/>
    </location>
</feature>
<feature type="unsure residue" description="L or I" evidence="5">
    <location>
        <position position="11"/>
    </location>
</feature>
<feature type="unsure residue" description="L or I" evidence="5">
    <location>
        <position position="14"/>
    </location>
</feature>
<feature type="unsure residue" description="L or I" evidence="5">
    <location>
        <position position="28"/>
    </location>
</feature>
<feature type="unsure residue" description="L or I" evidence="5">
    <location>
        <position position="31"/>
    </location>
</feature>
<feature type="unsure residue" description="L or I" evidence="5">
    <location>
        <position position="32"/>
    </location>
</feature>
<feature type="unsure residue" description="L or I" evidence="5">
    <location>
        <position position="48"/>
    </location>
</feature>
<feature type="unsure residue" description="L or I" evidence="5">
    <location>
        <position position="54"/>
    </location>
</feature>
<feature type="unsure residue" description="L or I" evidence="5">
    <location>
        <position position="68"/>
    </location>
</feature>
<feature type="unsure residue" description="L or I" evidence="5">
    <location>
        <position position="75"/>
    </location>
</feature>
<feature type="unsure residue" description="L or I" evidence="5">
    <location>
        <position position="78"/>
    </location>
</feature>
<feature type="unsure residue" description="L or I" evidence="5">
    <location>
        <position position="81"/>
    </location>
</feature>
<feature type="unsure residue" description="L or I" evidence="5">
    <location>
        <position position="88"/>
    </location>
</feature>
<feature type="unsure residue" description="L or I" evidence="5">
    <location>
        <position position="91"/>
    </location>
</feature>
<feature type="unsure residue" description="L or I" evidence="5">
    <location>
        <position position="96"/>
    </location>
</feature>
<feature type="unsure residue" description="L or I" evidence="5">
    <location>
        <position position="105"/>
    </location>
</feature>
<feature type="unsure residue" description="L or I" evidence="5">
    <location>
        <position position="106"/>
    </location>
</feature>
<feature type="unsure residue" description="L or I" evidence="5">
    <location>
        <position position="110"/>
    </location>
</feature>
<feature type="unsure residue" description="L or I" evidence="5">
    <location>
        <position position="112"/>
    </location>
</feature>
<feature type="unsure residue" description="L or I" evidence="5">
    <location>
        <position position="118"/>
    </location>
</feature>
<feature type="unsure residue" description="L or I" evidence="5">
    <location>
        <position position="141"/>
    </location>
</feature>
<accession>B3EWD8</accession>
<name>HBB_TAMHU</name>
<proteinExistence type="evidence at protein level"/>